<dbReference type="EC" id="3.2.1.59" evidence="4"/>
<dbReference type="EMBL" id="AM920427">
    <property type="protein sequence ID" value="CAP80377.1"/>
    <property type="molecule type" value="Genomic_DNA"/>
</dbReference>
<dbReference type="RefSeq" id="XP_002557585.1">
    <property type="nucleotide sequence ID" value="XM_002557539.1"/>
</dbReference>
<dbReference type="SMR" id="B6GX22"/>
<dbReference type="CAZy" id="GH71">
    <property type="family name" value="Glycoside Hydrolase Family 71"/>
</dbReference>
<dbReference type="KEGG" id="pcs:N7525_001809"/>
<dbReference type="VEuPathDB" id="FungiDB:PCH_Pc12g07500"/>
<dbReference type="eggNOG" id="ENOG502RDR1">
    <property type="taxonomic scope" value="Eukaryota"/>
</dbReference>
<dbReference type="HOGENOM" id="CLU_019141_0_0_1"/>
<dbReference type="OMA" id="KPYIKAY"/>
<dbReference type="OrthoDB" id="3257981at2759"/>
<dbReference type="BioCyc" id="PCHR:PC12G07500-MONOMER"/>
<dbReference type="BRENDA" id="3.2.1.59">
    <property type="organism ID" value="4606"/>
</dbReference>
<dbReference type="Proteomes" id="UP000000724">
    <property type="component" value="Contig Pc00c12"/>
</dbReference>
<dbReference type="GO" id="GO:0005576">
    <property type="term" value="C:extracellular region"/>
    <property type="evidence" value="ECO:0007669"/>
    <property type="project" value="UniProtKB-SubCell"/>
</dbReference>
<dbReference type="GO" id="GO:0051118">
    <property type="term" value="F:glucan endo-1,3-alpha-glucosidase activity"/>
    <property type="evidence" value="ECO:0007669"/>
    <property type="project" value="UniProtKB-EC"/>
</dbReference>
<dbReference type="CDD" id="cd11577">
    <property type="entry name" value="GH71"/>
    <property type="match status" value="1"/>
</dbReference>
<dbReference type="FunFam" id="3.20.20.80:FF:000268">
    <property type="entry name" value="Glucan endo-1,3-alpha-glucosidase agn2"/>
    <property type="match status" value="1"/>
</dbReference>
<dbReference type="Gene3D" id="3.20.20.80">
    <property type="entry name" value="Glycosidases"/>
    <property type="match status" value="1"/>
</dbReference>
<dbReference type="InterPro" id="IPR005197">
    <property type="entry name" value="Glyco_hydro_71"/>
</dbReference>
<dbReference type="Pfam" id="PF03659">
    <property type="entry name" value="Glyco_hydro_71"/>
    <property type="match status" value="1"/>
</dbReference>
<name>MU71A_PENRW</name>
<protein>
    <recommendedName>
        <fullName evidence="5">Mutanase Pc12g07500</fullName>
        <ecNumber evidence="4">3.2.1.59</ecNumber>
    </recommendedName>
    <alternativeName>
        <fullName evidence="5">Endo-1,3-alpha-glucanase Pc12g07500</fullName>
    </alternativeName>
    <alternativeName>
        <fullName evidence="6">Glucan endo-1,3-alpha-glucosidas Pc12g07500</fullName>
    </alternativeName>
</protein>
<proteinExistence type="evidence at protein level"/>
<feature type="signal peptide" evidence="2">
    <location>
        <begin position="1"/>
        <end position="21"/>
    </location>
</feature>
<feature type="chain" id="PRO_5000408703" description="Mutanase Pc12g07500" evidence="2">
    <location>
        <begin position="22"/>
        <end position="445"/>
    </location>
</feature>
<feature type="glycosylation site" description="N-linked (GlcNAc...) asparagine" evidence="3">
    <location>
        <position position="386"/>
    </location>
</feature>
<feature type="glycosylation site" description="N-linked (GlcNAc...) asparagine" evidence="3">
    <location>
        <position position="437"/>
    </location>
</feature>
<evidence type="ECO:0000250" key="1">
    <source>
        <dbReference type="UniProtKB" id="O13716"/>
    </source>
</evidence>
<evidence type="ECO:0000255" key="2"/>
<evidence type="ECO:0000255" key="3">
    <source>
        <dbReference type="PROSITE-ProRule" id="PRU00498"/>
    </source>
</evidence>
<evidence type="ECO:0000269" key="4">
    <source>
    </source>
</evidence>
<evidence type="ECO:0000303" key="5">
    <source>
    </source>
</evidence>
<evidence type="ECO:0000305" key="6"/>
<gene>
    <name type="ORF">PCH_Pc12g07500</name>
</gene>
<sequence>MIWKSLFSALAILTHILPALTAPALDSELSSQSEDKYVFAHFMVGIVKDYQLEDWKEDMTTAQSIGIDAFALNCASIDSYTPTQLALAYEAAEQVNFKVVISFDFAYWTNGDTEKITEYMKQYAGHPAQMQYKGAAVVSTFVGDSFNWDAVKQNTPHPIYAVPNLQDPAEATTGPAKSADGAFSWLAWPTDGGNSIIPGPMTTVWDDRFVHFLAGKTYMAPVSPWFSTHFNTKNWVFVCENLPTLRWEQMLSLQPDLIEIISWNDYGESHYIGPYSAHHSDDGSSQWATNMPHDGWRNLFKPYIAAYKSGAKTPTVEADEVVYWYRPTPKGVVCTGDTLSAPMGADMLSDSIFVATMLTSPGTLTVQSGNNAPVDIEVPAGIVTSNVTMGVGAQSFKVARDGQTILSGQGGLDVKDSCVHYNFNVYVGSTKGGDGSNTTGARGSM</sequence>
<keyword id="KW-0325">Glycoprotein</keyword>
<keyword id="KW-0326">Glycosidase</keyword>
<keyword id="KW-0378">Hydrolase</keyword>
<keyword id="KW-1185">Reference proteome</keyword>
<keyword id="KW-0964">Secreted</keyword>
<keyword id="KW-0732">Signal</keyword>
<comment type="function">
    <text evidence="4">Hydrolyzes 1,3-alpha-glucan predominantly into pentasaccharides. May enhance the efficacy of fungal antibiotics by degrading bacterial exopolysaccharides.</text>
</comment>
<comment type="catalytic activity">
    <reaction evidence="4">
        <text>Endohydrolysis of (1-&gt;3)-alpha-D-glucosidic linkages in isolichenin, pseudonigeran and nigeran.</text>
        <dbReference type="EC" id="3.2.1.59"/>
    </reaction>
</comment>
<comment type="subunit">
    <text evidence="1">Monomer.</text>
</comment>
<comment type="subcellular location">
    <subcellularLocation>
        <location evidence="4">Secreted</location>
    </subcellularLocation>
</comment>
<comment type="induction">
    <text evidence="4">Expression is induced in response to the presence of B.subtilis.</text>
</comment>
<comment type="similarity">
    <text evidence="6">Belongs to the glycosyl hydrolase 71 family.</text>
</comment>
<accession>B6GX22</accession>
<organism>
    <name type="scientific">Penicillium rubens (strain ATCC 28089 / DSM 1075 / NRRL 1951 / Wisconsin 54-1255)</name>
    <name type="common">Penicillium chrysogenum</name>
    <dbReference type="NCBI Taxonomy" id="500485"/>
    <lineage>
        <taxon>Eukaryota</taxon>
        <taxon>Fungi</taxon>
        <taxon>Dikarya</taxon>
        <taxon>Ascomycota</taxon>
        <taxon>Pezizomycotina</taxon>
        <taxon>Eurotiomycetes</taxon>
        <taxon>Eurotiomycetidae</taxon>
        <taxon>Eurotiales</taxon>
        <taxon>Aspergillaceae</taxon>
        <taxon>Penicillium</taxon>
        <taxon>Penicillium chrysogenum species complex</taxon>
    </lineage>
</organism>
<reference key="1">
    <citation type="journal article" date="2008" name="Nat. Biotechnol.">
        <title>Genome sequencing and analysis of the filamentous fungus Penicillium chrysogenum.</title>
        <authorList>
            <person name="van den Berg M.A."/>
            <person name="Albang R."/>
            <person name="Albermann K."/>
            <person name="Badger J.H."/>
            <person name="Daran J.-M."/>
            <person name="Driessen A.J.M."/>
            <person name="Garcia-Estrada C."/>
            <person name="Fedorova N.D."/>
            <person name="Harris D.M."/>
            <person name="Heijne W.H.M."/>
            <person name="Joardar V.S."/>
            <person name="Kiel J.A.K.W."/>
            <person name="Kovalchuk A."/>
            <person name="Martin J.F."/>
            <person name="Nierman W.C."/>
            <person name="Nijland J.G."/>
            <person name="Pronk J.T."/>
            <person name="Roubos J.A."/>
            <person name="van der Klei I.J."/>
            <person name="van Peij N.N.M.E."/>
            <person name="Veenhuis M."/>
            <person name="von Doehren H."/>
            <person name="Wagner C."/>
            <person name="Wortman J.R."/>
            <person name="Bovenberg R.A.L."/>
        </authorList>
    </citation>
    <scope>NUCLEOTIDE SEQUENCE [LARGE SCALE GENOMIC DNA]</scope>
    <source>
        <strain>ATCC 28089 / DSM 1075 / NRRL 1951 / Wisconsin 54-1255</strain>
    </source>
</reference>
<reference key="2">
    <citation type="journal article" date="2014" name="BMC Microbiol.">
        <title>Functional characterization of a Penicillium chrysogenum mutanase gene induced upon co-cultivation with Bacillus subtilis.</title>
        <authorList>
            <person name="Bajaj I."/>
            <person name="Veiga T."/>
            <person name="van Dissel D."/>
            <person name="Pronk J.T."/>
            <person name="Daran J.M."/>
        </authorList>
    </citation>
    <scope>FUNCTION</scope>
    <scope>CATALYTIC ACTIVITY</scope>
    <scope>INDUCTION</scope>
    <scope>SUBCELLULAR LOCATION</scope>
</reference>